<protein>
    <recommendedName>
        <fullName evidence="1">ATP phosphoribosyltransferase</fullName>
        <shortName evidence="1">ATP-PRT</shortName>
        <shortName evidence="1">ATP-PRTase</shortName>
        <ecNumber evidence="1">2.4.2.17</ecNumber>
    </recommendedName>
</protein>
<organism>
    <name type="scientific">Arthrobacter sp. (strain FB24)</name>
    <dbReference type="NCBI Taxonomy" id="290399"/>
    <lineage>
        <taxon>Bacteria</taxon>
        <taxon>Bacillati</taxon>
        <taxon>Actinomycetota</taxon>
        <taxon>Actinomycetes</taxon>
        <taxon>Micrococcales</taxon>
        <taxon>Micrococcaceae</taxon>
        <taxon>Arthrobacter</taxon>
    </lineage>
</organism>
<reference key="1">
    <citation type="journal article" date="2013" name="Stand. Genomic Sci.">
        <title>Complete genome sequence of Arthrobacter sp. strain FB24.</title>
        <authorList>
            <person name="Nakatsu C.H."/>
            <person name="Barabote R."/>
            <person name="Thompson S."/>
            <person name="Bruce D."/>
            <person name="Detter C."/>
            <person name="Brettin T."/>
            <person name="Han C."/>
            <person name="Beasley F."/>
            <person name="Chen W."/>
            <person name="Konopka A."/>
            <person name="Xie G."/>
        </authorList>
    </citation>
    <scope>NUCLEOTIDE SEQUENCE [LARGE SCALE GENOMIC DNA]</scope>
    <source>
        <strain>FB24</strain>
    </source>
</reference>
<evidence type="ECO:0000255" key="1">
    <source>
        <dbReference type="HAMAP-Rule" id="MF_00079"/>
    </source>
</evidence>
<comment type="function">
    <text evidence="1">Catalyzes the condensation of ATP and 5-phosphoribose 1-diphosphate to form N'-(5'-phosphoribosyl)-ATP (PR-ATP). Has a crucial role in the pathway because the rate of histidine biosynthesis seems to be controlled primarily by regulation of HisG enzymatic activity.</text>
</comment>
<comment type="catalytic activity">
    <reaction evidence="1">
        <text>1-(5-phospho-beta-D-ribosyl)-ATP + diphosphate = 5-phospho-alpha-D-ribose 1-diphosphate + ATP</text>
        <dbReference type="Rhea" id="RHEA:18473"/>
        <dbReference type="ChEBI" id="CHEBI:30616"/>
        <dbReference type="ChEBI" id="CHEBI:33019"/>
        <dbReference type="ChEBI" id="CHEBI:58017"/>
        <dbReference type="ChEBI" id="CHEBI:73183"/>
        <dbReference type="EC" id="2.4.2.17"/>
    </reaction>
</comment>
<comment type="cofactor">
    <cofactor evidence="1">
        <name>Mg(2+)</name>
        <dbReference type="ChEBI" id="CHEBI:18420"/>
    </cofactor>
</comment>
<comment type="activity regulation">
    <text evidence="1">Feedback inhibited by histidine.</text>
</comment>
<comment type="pathway">
    <text evidence="1">Amino-acid biosynthesis; L-histidine biosynthesis; L-histidine from 5-phospho-alpha-D-ribose 1-diphosphate: step 1/9.</text>
</comment>
<comment type="subcellular location">
    <subcellularLocation>
        <location evidence="1">Cytoplasm</location>
    </subcellularLocation>
</comment>
<comment type="similarity">
    <text evidence="1">Belongs to the ATP phosphoribosyltransferase family. Long subfamily.</text>
</comment>
<accession>A0JVK4</accession>
<feature type="chain" id="PRO_1000004441" description="ATP phosphoribosyltransferase">
    <location>
        <begin position="1"/>
        <end position="286"/>
    </location>
</feature>
<sequence>MLRVAVPNKGSLSEAASAMLSEAGYRQRRDTRELVMVDPDNDIEFFFLRPRDIAVYVGRGTLDVGITGRDLLLDAEVEAEELLPLGFAASTFRFAGPVGDFTKVEELEGKRLATSYDGLLRGYLAERGINAKVVRLDGAVESSVRLGVADAIADVVETGNTLKAAGMEIFGEPILKSEAVLIRRTGQEGAANGTAKEIEVLIRRLQGVLVARQYVLMDYDIRKELVEQAAALTPGLESPTVSPLRDSDWVAVRSMVPKKETNRIMDELYDLGARAILVSSIHACRI</sequence>
<keyword id="KW-0028">Amino-acid biosynthesis</keyword>
<keyword id="KW-0067">ATP-binding</keyword>
<keyword id="KW-0963">Cytoplasm</keyword>
<keyword id="KW-0328">Glycosyltransferase</keyword>
<keyword id="KW-0368">Histidine biosynthesis</keyword>
<keyword id="KW-0460">Magnesium</keyword>
<keyword id="KW-0479">Metal-binding</keyword>
<keyword id="KW-0547">Nucleotide-binding</keyword>
<keyword id="KW-1185">Reference proteome</keyword>
<keyword id="KW-0808">Transferase</keyword>
<proteinExistence type="inferred from homology"/>
<dbReference type="EC" id="2.4.2.17" evidence="1"/>
<dbReference type="EMBL" id="CP000454">
    <property type="protein sequence ID" value="ABK03074.1"/>
    <property type="molecule type" value="Genomic_DNA"/>
</dbReference>
<dbReference type="RefSeq" id="WP_011691540.1">
    <property type="nucleotide sequence ID" value="NC_008541.1"/>
</dbReference>
<dbReference type="SMR" id="A0JVK4"/>
<dbReference type="STRING" id="290399.Arth_1680"/>
<dbReference type="KEGG" id="art:Arth_1680"/>
<dbReference type="eggNOG" id="COG0040">
    <property type="taxonomic scope" value="Bacteria"/>
</dbReference>
<dbReference type="HOGENOM" id="CLU_038115_1_1_11"/>
<dbReference type="OrthoDB" id="9801867at2"/>
<dbReference type="UniPathway" id="UPA00031">
    <property type="reaction ID" value="UER00006"/>
</dbReference>
<dbReference type="Proteomes" id="UP000000754">
    <property type="component" value="Chromosome"/>
</dbReference>
<dbReference type="GO" id="GO:0005737">
    <property type="term" value="C:cytoplasm"/>
    <property type="evidence" value="ECO:0007669"/>
    <property type="project" value="UniProtKB-SubCell"/>
</dbReference>
<dbReference type="GO" id="GO:0005524">
    <property type="term" value="F:ATP binding"/>
    <property type="evidence" value="ECO:0007669"/>
    <property type="project" value="UniProtKB-KW"/>
</dbReference>
<dbReference type="GO" id="GO:0003879">
    <property type="term" value="F:ATP phosphoribosyltransferase activity"/>
    <property type="evidence" value="ECO:0007669"/>
    <property type="project" value="UniProtKB-UniRule"/>
</dbReference>
<dbReference type="GO" id="GO:0000287">
    <property type="term" value="F:magnesium ion binding"/>
    <property type="evidence" value="ECO:0007669"/>
    <property type="project" value="UniProtKB-UniRule"/>
</dbReference>
<dbReference type="GO" id="GO:0000105">
    <property type="term" value="P:L-histidine biosynthetic process"/>
    <property type="evidence" value="ECO:0007669"/>
    <property type="project" value="UniProtKB-UniRule"/>
</dbReference>
<dbReference type="CDD" id="cd13591">
    <property type="entry name" value="PBP2_HisGL1"/>
    <property type="match status" value="1"/>
</dbReference>
<dbReference type="FunFam" id="3.30.70.120:FF:000003">
    <property type="entry name" value="ATP phosphoribosyltransferase"/>
    <property type="match status" value="1"/>
</dbReference>
<dbReference type="Gene3D" id="3.30.70.120">
    <property type="match status" value="1"/>
</dbReference>
<dbReference type="Gene3D" id="3.40.190.10">
    <property type="entry name" value="Periplasmic binding protein-like II"/>
    <property type="match status" value="2"/>
</dbReference>
<dbReference type="HAMAP" id="MF_00079">
    <property type="entry name" value="HisG_Long"/>
    <property type="match status" value="1"/>
</dbReference>
<dbReference type="InterPro" id="IPR020621">
    <property type="entry name" value="ATP-PRT_HisG_long"/>
</dbReference>
<dbReference type="InterPro" id="IPR013820">
    <property type="entry name" value="ATP_PRibTrfase_cat"/>
</dbReference>
<dbReference type="InterPro" id="IPR018198">
    <property type="entry name" value="ATP_PRibTrfase_CS"/>
</dbReference>
<dbReference type="InterPro" id="IPR001348">
    <property type="entry name" value="ATP_PRibTrfase_HisG"/>
</dbReference>
<dbReference type="InterPro" id="IPR013115">
    <property type="entry name" value="HisG_C"/>
</dbReference>
<dbReference type="InterPro" id="IPR011322">
    <property type="entry name" value="N-reg_PII-like_a/b"/>
</dbReference>
<dbReference type="InterPro" id="IPR015867">
    <property type="entry name" value="N-reg_PII/ATP_PRibTrfase_C"/>
</dbReference>
<dbReference type="NCBIfam" id="TIGR00070">
    <property type="entry name" value="hisG"/>
    <property type="match status" value="1"/>
</dbReference>
<dbReference type="NCBIfam" id="TIGR03455">
    <property type="entry name" value="HisG_C-term"/>
    <property type="match status" value="1"/>
</dbReference>
<dbReference type="PANTHER" id="PTHR21403:SF8">
    <property type="entry name" value="ATP PHOSPHORIBOSYLTRANSFERASE"/>
    <property type="match status" value="1"/>
</dbReference>
<dbReference type="PANTHER" id="PTHR21403">
    <property type="entry name" value="ATP PHOSPHORIBOSYLTRANSFERASE ATP-PRTASE"/>
    <property type="match status" value="1"/>
</dbReference>
<dbReference type="Pfam" id="PF01634">
    <property type="entry name" value="HisG"/>
    <property type="match status" value="1"/>
</dbReference>
<dbReference type="Pfam" id="PF08029">
    <property type="entry name" value="HisG_C"/>
    <property type="match status" value="1"/>
</dbReference>
<dbReference type="SUPFAM" id="SSF54913">
    <property type="entry name" value="GlnB-like"/>
    <property type="match status" value="1"/>
</dbReference>
<dbReference type="SUPFAM" id="SSF53850">
    <property type="entry name" value="Periplasmic binding protein-like II"/>
    <property type="match status" value="1"/>
</dbReference>
<dbReference type="PROSITE" id="PS01316">
    <property type="entry name" value="ATP_P_PHORIBOSYLTR"/>
    <property type="match status" value="1"/>
</dbReference>
<name>HIS1_ARTS2</name>
<gene>
    <name evidence="1" type="primary">hisG</name>
    <name type="ordered locus">Arth_1680</name>
</gene>